<name>TRPE_MYCTO</name>
<keyword id="KW-0002">3D-structure</keyword>
<keyword id="KW-0028">Amino-acid biosynthesis</keyword>
<keyword id="KW-0057">Aromatic amino acid biosynthesis</keyword>
<keyword id="KW-0456">Lyase</keyword>
<keyword id="KW-0460">Magnesium</keyword>
<keyword id="KW-0479">Metal-binding</keyword>
<keyword id="KW-1185">Reference proteome</keyword>
<keyword id="KW-0822">Tryptophan biosynthesis</keyword>
<proteinExistence type="evidence at protein level"/>
<protein>
    <recommendedName>
        <fullName>Anthranilate synthase component 1</fullName>
        <shortName>AS</shortName>
        <shortName>ASI</shortName>
        <ecNumber>4.1.3.27</ecNumber>
    </recommendedName>
</protein>
<sequence length="516" mass="55849">MHADLAATTSREDFRLLAAEHRVVPVTRKVLADSETPLSAYRKLAANRPGTFLLESAENGRSWSRWSFIGAGAPTALTVREGQAVWLGAVPKDAPTGGDPLRALQVTLELLATADRQSEPGLPPLSGGMVGFFAYDMVRRLERLPERAVDDLCLPDMLLLLATDVAAVDHHEGTITLIANAVNWNGTDERVDWAYDDAVARLDVMTAALGQPLPSTVATFSRPEPRHRAQRTVEEYGAIVEYLVDQIAAGEAFQVVPSQRFEMDTDVDPIDVYRILRVTNPSPYMYLLQVPNSDGAVDFSIVGSSPEALVTVHEGWATTHPIAGTRWRGRTDDEDVLLEKELLADDKERAEHLMLVDLGRNDLGRVCTPGTVRVEDYSHIERYSHVMHLVSTVTGKLGEGRTALDAVTACFPAGTLSGAPKVRAMELIEEVEKTRRGLYGGVVGYLDFAGNADFAIAIRTALMRNGTAYVQAGGGVVADSNGSYEYNEARNKARAVLNAIAAAETLAAPGANRSGC</sequence>
<feature type="chain" id="PRO_0000428462" description="Anthranilate synthase component 1">
    <location>
        <begin position="1"/>
        <end position="516"/>
    </location>
</feature>
<feature type="binding site" evidence="2">
    <location>
        <position position="56"/>
    </location>
    <ligand>
        <name>L-tryptophan</name>
        <dbReference type="ChEBI" id="CHEBI:57912"/>
    </ligand>
</feature>
<feature type="binding site" evidence="2">
    <location>
        <begin position="283"/>
        <end position="285"/>
    </location>
    <ligand>
        <name>L-tryptophan</name>
        <dbReference type="ChEBI" id="CHEBI:57912"/>
    </ligand>
</feature>
<feature type="binding site" evidence="2">
    <location>
        <begin position="324"/>
        <end position="325"/>
    </location>
    <ligand>
        <name>chorismate</name>
        <dbReference type="ChEBI" id="CHEBI:29748"/>
    </ligand>
</feature>
<feature type="binding site" evidence="2">
    <location>
        <position position="351"/>
    </location>
    <ligand>
        <name>Mg(2+)</name>
        <dbReference type="ChEBI" id="CHEBI:18420"/>
    </ligand>
</feature>
<feature type="binding site" evidence="2">
    <location>
        <position position="439"/>
    </location>
    <ligand>
        <name>chorismate</name>
        <dbReference type="ChEBI" id="CHEBI:29748"/>
    </ligand>
</feature>
<feature type="binding site" evidence="2">
    <location>
        <position position="459"/>
    </location>
    <ligand>
        <name>chorismate</name>
        <dbReference type="ChEBI" id="CHEBI:29748"/>
    </ligand>
</feature>
<feature type="binding site" evidence="2">
    <location>
        <begin position="473"/>
        <end position="475"/>
    </location>
    <ligand>
        <name>chorismate</name>
        <dbReference type="ChEBI" id="CHEBI:29748"/>
    </ligand>
</feature>
<feature type="binding site" evidence="2">
    <location>
        <position position="475"/>
    </location>
    <ligand>
        <name>chorismate</name>
        <dbReference type="ChEBI" id="CHEBI:29748"/>
    </ligand>
</feature>
<feature type="binding site" evidence="2">
    <location>
        <position position="488"/>
    </location>
    <ligand>
        <name>Mg(2+)</name>
        <dbReference type="ChEBI" id="CHEBI:18420"/>
    </ligand>
</feature>
<feature type="helix" evidence="4">
    <location>
        <begin position="11"/>
        <end position="20"/>
    </location>
</feature>
<feature type="strand" evidence="4">
    <location>
        <begin position="22"/>
        <end position="31"/>
    </location>
</feature>
<feature type="helix" evidence="4">
    <location>
        <begin position="37"/>
        <end position="44"/>
    </location>
</feature>
<feature type="turn" evidence="4">
    <location>
        <begin position="45"/>
        <end position="47"/>
    </location>
</feature>
<feature type="strand" evidence="4">
    <location>
        <begin position="51"/>
        <end position="55"/>
    </location>
</feature>
<feature type="helix" evidence="4">
    <location>
        <begin position="58"/>
        <end position="60"/>
    </location>
</feature>
<feature type="strand" evidence="4">
    <location>
        <begin position="61"/>
        <end position="63"/>
    </location>
</feature>
<feature type="strand" evidence="4">
    <location>
        <begin position="65"/>
        <end position="71"/>
    </location>
</feature>
<feature type="strand" evidence="4">
    <location>
        <begin position="76"/>
        <end position="80"/>
    </location>
</feature>
<feature type="strand" evidence="4">
    <location>
        <begin position="83"/>
        <end position="88"/>
    </location>
</feature>
<feature type="helix" evidence="4">
    <location>
        <begin position="100"/>
        <end position="110"/>
    </location>
</feature>
<feature type="strand" evidence="4">
    <location>
        <begin position="126"/>
        <end position="133"/>
    </location>
</feature>
<feature type="helix" evidence="4">
    <location>
        <begin position="135"/>
        <end position="140"/>
    </location>
</feature>
<feature type="strand" evidence="4">
    <location>
        <begin position="156"/>
        <end position="162"/>
    </location>
</feature>
<feature type="strand" evidence="4">
    <location>
        <begin position="164"/>
        <end position="169"/>
    </location>
</feature>
<feature type="turn" evidence="4">
    <location>
        <begin position="170"/>
        <end position="173"/>
    </location>
</feature>
<feature type="strand" evidence="4">
    <location>
        <begin position="174"/>
        <end position="182"/>
    </location>
</feature>
<feature type="helix" evidence="4">
    <location>
        <begin position="191"/>
        <end position="210"/>
    </location>
</feature>
<feature type="strand" evidence="4">
    <location>
        <begin position="228"/>
        <end position="230"/>
    </location>
</feature>
<feature type="helix" evidence="4">
    <location>
        <begin position="233"/>
        <end position="248"/>
    </location>
</feature>
<feature type="strand" evidence="4">
    <location>
        <begin position="253"/>
        <end position="255"/>
    </location>
</feature>
<feature type="strand" evidence="4">
    <location>
        <begin position="258"/>
        <end position="264"/>
    </location>
</feature>
<feature type="helix" evidence="4">
    <location>
        <begin position="269"/>
        <end position="279"/>
    </location>
</feature>
<feature type="strand" evidence="4">
    <location>
        <begin position="283"/>
        <end position="291"/>
    </location>
</feature>
<feature type="strand" evidence="4">
    <location>
        <begin position="295"/>
        <end position="306"/>
    </location>
</feature>
<feature type="strand" evidence="4">
    <location>
        <begin position="308"/>
        <end position="313"/>
    </location>
</feature>
<feature type="strand" evidence="4">
    <location>
        <begin position="316"/>
        <end position="319"/>
    </location>
</feature>
<feature type="strand" evidence="4">
    <location>
        <begin position="322"/>
        <end position="327"/>
    </location>
</feature>
<feature type="helix" evidence="4">
    <location>
        <begin position="333"/>
        <end position="344"/>
    </location>
</feature>
<feature type="helix" evidence="4">
    <location>
        <begin position="346"/>
        <end position="364"/>
    </location>
</feature>
<feature type="strand" evidence="4">
    <location>
        <begin position="373"/>
        <end position="382"/>
    </location>
</feature>
<feature type="strand" evidence="4">
    <location>
        <begin position="384"/>
        <end position="397"/>
    </location>
</feature>
<feature type="helix" evidence="4">
    <location>
        <begin position="403"/>
        <end position="410"/>
    </location>
</feature>
<feature type="helix" evidence="4">
    <location>
        <begin position="414"/>
        <end position="416"/>
    </location>
</feature>
<feature type="strand" evidence="4">
    <location>
        <begin position="417"/>
        <end position="420"/>
    </location>
</feature>
<feature type="helix" evidence="4">
    <location>
        <begin position="421"/>
        <end position="431"/>
    </location>
</feature>
<feature type="turn" evidence="4">
    <location>
        <begin position="437"/>
        <end position="440"/>
    </location>
</feature>
<feature type="strand" evidence="4">
    <location>
        <begin position="441"/>
        <end position="447"/>
    </location>
</feature>
<feature type="strand" evidence="4">
    <location>
        <begin position="452"/>
        <end position="456"/>
    </location>
</feature>
<feature type="strand" evidence="4">
    <location>
        <begin position="459"/>
        <end position="464"/>
    </location>
</feature>
<feature type="strand" evidence="4">
    <location>
        <begin position="467"/>
        <end position="473"/>
    </location>
</feature>
<feature type="helix" evidence="4">
    <location>
        <begin position="482"/>
        <end position="503"/>
    </location>
</feature>
<gene>
    <name type="primary">trpE</name>
    <name type="ordered locus">MT1644</name>
</gene>
<reference key="1">
    <citation type="journal article" date="2002" name="J. Bacteriol.">
        <title>Whole-genome comparison of Mycobacterium tuberculosis clinical and laboratory strains.</title>
        <authorList>
            <person name="Fleischmann R.D."/>
            <person name="Alland D."/>
            <person name="Eisen J.A."/>
            <person name="Carpenter L."/>
            <person name="White O."/>
            <person name="Peterson J.D."/>
            <person name="DeBoy R.T."/>
            <person name="Dodson R.J."/>
            <person name="Gwinn M.L."/>
            <person name="Haft D.H."/>
            <person name="Hickey E.K."/>
            <person name="Kolonay J.F."/>
            <person name="Nelson W.C."/>
            <person name="Umayam L.A."/>
            <person name="Ermolaeva M.D."/>
            <person name="Salzberg S.L."/>
            <person name="Delcher A."/>
            <person name="Utterback T.R."/>
            <person name="Weidman J.F."/>
            <person name="Khouri H.M."/>
            <person name="Gill J."/>
            <person name="Mikula A."/>
            <person name="Bishai W."/>
            <person name="Jacobs W.R. Jr."/>
            <person name="Venter J.C."/>
            <person name="Fraser C.M."/>
        </authorList>
    </citation>
    <scope>NUCLEOTIDE SEQUENCE [LARGE SCALE GENOMIC DNA]</scope>
    <source>
        <strain>CDC 1551 / Oshkosh</strain>
    </source>
</reference>
<organism>
    <name type="scientific">Mycobacterium tuberculosis (strain CDC 1551 / Oshkosh)</name>
    <dbReference type="NCBI Taxonomy" id="83331"/>
    <lineage>
        <taxon>Bacteria</taxon>
        <taxon>Bacillati</taxon>
        <taxon>Actinomycetota</taxon>
        <taxon>Actinomycetes</taxon>
        <taxon>Mycobacteriales</taxon>
        <taxon>Mycobacteriaceae</taxon>
        <taxon>Mycobacterium</taxon>
        <taxon>Mycobacterium tuberculosis complex</taxon>
    </lineage>
</organism>
<comment type="function">
    <text evidence="1">Part of a heterotetrameric complex that catalyzes the two-step biosynthesis of anthranilate, an intermediate in the biosynthesis of L-tryptophan. In the first step, the glutamine-binding beta subunit (TrpG) of anthranilate synthase (AS) provides the glutamine amidotransferase activity which generates ammonia as a substrate that, along with chorismate, is used in the second step, catalyzed by the large alpha subunit of AS (TrpE) to produce anthranilate. In the absence of TrpG, TrpE can synthesize anthranilate directly from chorismate and high concentrations of ammonia (By similarity).</text>
</comment>
<comment type="catalytic activity">
    <reaction>
        <text>chorismate + L-glutamine = anthranilate + pyruvate + L-glutamate + H(+)</text>
        <dbReference type="Rhea" id="RHEA:21732"/>
        <dbReference type="ChEBI" id="CHEBI:15361"/>
        <dbReference type="ChEBI" id="CHEBI:15378"/>
        <dbReference type="ChEBI" id="CHEBI:16567"/>
        <dbReference type="ChEBI" id="CHEBI:29748"/>
        <dbReference type="ChEBI" id="CHEBI:29985"/>
        <dbReference type="ChEBI" id="CHEBI:58359"/>
        <dbReference type="EC" id="4.1.3.27"/>
    </reaction>
</comment>
<comment type="cofactor">
    <cofactor evidence="2">
        <name>Mg(2+)</name>
        <dbReference type="ChEBI" id="CHEBI:18420"/>
    </cofactor>
    <text evidence="2">Binds 1 Mg(2+) ion per subunit.</text>
</comment>
<comment type="activity regulation">
    <text evidence="1">Feedback inhibited by tryptophan.</text>
</comment>
<comment type="pathway">
    <text>Amino-acid biosynthesis; L-tryptophan biosynthesis; L-tryptophan from chorismate: step 1/5.</text>
</comment>
<comment type="subunit">
    <text evidence="1">Heterotetramer consisting of two non-identical subunits: a beta subunit (TrpG) and a large alpha subunit (TrpE).</text>
</comment>
<comment type="similarity">
    <text evidence="3">Belongs to the anthranilate synthase component I family.</text>
</comment>
<dbReference type="EC" id="4.1.3.27"/>
<dbReference type="EMBL" id="AE000516">
    <property type="protein sequence ID" value="AAK45913.1"/>
    <property type="molecule type" value="Genomic_DNA"/>
</dbReference>
<dbReference type="PIR" id="G70556">
    <property type="entry name" value="G70556"/>
</dbReference>
<dbReference type="RefSeq" id="WP_003407977.1">
    <property type="nucleotide sequence ID" value="NZ_KK341227.1"/>
</dbReference>
<dbReference type="PDB" id="5CWA">
    <property type="method" value="X-ray"/>
    <property type="resolution" value="2.10 A"/>
    <property type="chains" value="A=1-511"/>
</dbReference>
<dbReference type="PDBsum" id="5CWA"/>
<dbReference type="SMR" id="P9WFX2"/>
<dbReference type="KEGG" id="mtc:MT1644"/>
<dbReference type="PATRIC" id="fig|83331.31.peg.1767"/>
<dbReference type="HOGENOM" id="CLU_006493_9_3_11"/>
<dbReference type="BRENDA" id="4.1.3.27">
    <property type="organism ID" value="3445"/>
</dbReference>
<dbReference type="UniPathway" id="UPA00035">
    <property type="reaction ID" value="UER00040"/>
</dbReference>
<dbReference type="EvolutionaryTrace" id="P9WFX2"/>
<dbReference type="Proteomes" id="UP000001020">
    <property type="component" value="Chromosome"/>
</dbReference>
<dbReference type="GO" id="GO:0004049">
    <property type="term" value="F:anthranilate synthase activity"/>
    <property type="evidence" value="ECO:0007669"/>
    <property type="project" value="UniProtKB-EC"/>
</dbReference>
<dbReference type="GO" id="GO:0046872">
    <property type="term" value="F:metal ion binding"/>
    <property type="evidence" value="ECO:0007669"/>
    <property type="project" value="UniProtKB-KW"/>
</dbReference>
<dbReference type="GO" id="GO:0000162">
    <property type="term" value="P:L-tryptophan biosynthetic process"/>
    <property type="evidence" value="ECO:0007669"/>
    <property type="project" value="UniProtKB-UniPathway"/>
</dbReference>
<dbReference type="FunFam" id="3.60.120.10:FF:000008">
    <property type="entry name" value="Anthranilate synthase component 1"/>
    <property type="match status" value="1"/>
</dbReference>
<dbReference type="Gene3D" id="3.60.120.10">
    <property type="entry name" value="Anthranilate synthase"/>
    <property type="match status" value="1"/>
</dbReference>
<dbReference type="InterPro" id="IPR005801">
    <property type="entry name" value="ADC_synthase"/>
</dbReference>
<dbReference type="InterPro" id="IPR019999">
    <property type="entry name" value="Anth_synth_I-like"/>
</dbReference>
<dbReference type="InterPro" id="IPR006805">
    <property type="entry name" value="Anth_synth_I_N"/>
</dbReference>
<dbReference type="InterPro" id="IPR005256">
    <property type="entry name" value="Anth_synth_I_PabB"/>
</dbReference>
<dbReference type="InterPro" id="IPR015890">
    <property type="entry name" value="Chorismate_C"/>
</dbReference>
<dbReference type="NCBIfam" id="NF010086">
    <property type="entry name" value="PRK13571.1"/>
    <property type="match status" value="1"/>
</dbReference>
<dbReference type="NCBIfam" id="TIGR00564">
    <property type="entry name" value="trpE_most"/>
    <property type="match status" value="1"/>
</dbReference>
<dbReference type="PANTHER" id="PTHR11236">
    <property type="entry name" value="AMINOBENZOATE/ANTHRANILATE SYNTHASE"/>
    <property type="match status" value="1"/>
</dbReference>
<dbReference type="PANTHER" id="PTHR11236:SF46">
    <property type="entry name" value="ANTHRANILATE SYNTHASE COMPONENT 1"/>
    <property type="match status" value="1"/>
</dbReference>
<dbReference type="Pfam" id="PF04715">
    <property type="entry name" value="Anth_synt_I_N"/>
    <property type="match status" value="1"/>
</dbReference>
<dbReference type="Pfam" id="PF00425">
    <property type="entry name" value="Chorismate_bind"/>
    <property type="match status" value="1"/>
</dbReference>
<dbReference type="PRINTS" id="PR00095">
    <property type="entry name" value="ANTSNTHASEI"/>
</dbReference>
<dbReference type="SUPFAM" id="SSF56322">
    <property type="entry name" value="ADC synthase"/>
    <property type="match status" value="1"/>
</dbReference>
<accession>P9WFX2</accession>
<accession>I7BEI8</accession>
<accession>O06127</accession>
<accession>P67001</accession>
<evidence type="ECO:0000250" key="1"/>
<evidence type="ECO:0000250" key="2">
    <source>
        <dbReference type="UniProtKB" id="P00897"/>
    </source>
</evidence>
<evidence type="ECO:0000305" key="3"/>
<evidence type="ECO:0007829" key="4">
    <source>
        <dbReference type="PDB" id="5CWA"/>
    </source>
</evidence>